<organism>
    <name type="scientific">Chlorobium chlorochromatii (strain CaD3)</name>
    <dbReference type="NCBI Taxonomy" id="340177"/>
    <lineage>
        <taxon>Bacteria</taxon>
        <taxon>Pseudomonadati</taxon>
        <taxon>Chlorobiota</taxon>
        <taxon>Chlorobiia</taxon>
        <taxon>Chlorobiales</taxon>
        <taxon>Chlorobiaceae</taxon>
        <taxon>Chlorobium/Pelodictyon group</taxon>
        <taxon>Chlorobium</taxon>
    </lineage>
</organism>
<comment type="catalytic activity">
    <reaction evidence="1">
        <text>1-(5-phospho-beta-D-ribosyl)-5-[(5-phospho-beta-D-ribosylamino)methylideneamino]imidazole-4-carboxamide = 5-[(5-phospho-1-deoxy-D-ribulos-1-ylimino)methylamino]-1-(5-phospho-beta-D-ribosyl)imidazole-4-carboxamide</text>
        <dbReference type="Rhea" id="RHEA:15469"/>
        <dbReference type="ChEBI" id="CHEBI:58435"/>
        <dbReference type="ChEBI" id="CHEBI:58525"/>
        <dbReference type="EC" id="5.3.1.16"/>
    </reaction>
</comment>
<comment type="pathway">
    <text evidence="1">Amino-acid biosynthesis; L-histidine biosynthesis; L-histidine from 5-phospho-alpha-D-ribose 1-diphosphate: step 4/9.</text>
</comment>
<comment type="subcellular location">
    <subcellularLocation>
        <location evidence="1">Cytoplasm</location>
    </subcellularLocation>
</comment>
<comment type="similarity">
    <text evidence="1">Belongs to the HisA/HisF family.</text>
</comment>
<proteinExistence type="inferred from homology"/>
<evidence type="ECO:0000255" key="1">
    <source>
        <dbReference type="HAMAP-Rule" id="MF_01014"/>
    </source>
</evidence>
<sequence>MLIIPAIDIKDGKCVRLTRGDFSQKKIYLDNPSDMAIIWRKQNAKMLHIVDLDAALTGEMVNIAAISDIVANVDIPVQVGGGIRSVDAVKSYLDIGVARVIIGSAAVTNPKLVEELMHIYRPSQIVVGIDAENGVPKIKGWLESATMQDYELALRMKEMGIERIIYTDITRDGMMQGIGYESTKRFAEKAGMKVTASGGVTNSSDLHKLEGLRRYGVDSVIVGKALYECNFPCQELWYSFEDEISIDHNFSTARQKS</sequence>
<name>HIS4_CHLCH</name>
<gene>
    <name evidence="1" type="primary">hisA</name>
    <name type="ordered locus">Cag_0540</name>
</gene>
<protein>
    <recommendedName>
        <fullName evidence="1">1-(5-phosphoribosyl)-5-[(5-phosphoribosylamino)methylideneamino] imidazole-4-carboxamide isomerase</fullName>
        <ecNumber evidence="1">5.3.1.16</ecNumber>
    </recommendedName>
    <alternativeName>
        <fullName evidence="1">Phosphoribosylformimino-5-aminoimidazole carboxamide ribotide isomerase</fullName>
    </alternativeName>
</protein>
<reference key="1">
    <citation type="submission" date="2005-08" db="EMBL/GenBank/DDBJ databases">
        <title>Complete sequence of Chlorobium chlorochromatii CaD3.</title>
        <authorList>
            <consortium name="US DOE Joint Genome Institute"/>
            <person name="Copeland A."/>
            <person name="Lucas S."/>
            <person name="Lapidus A."/>
            <person name="Barry K."/>
            <person name="Detter J.C."/>
            <person name="Glavina T."/>
            <person name="Hammon N."/>
            <person name="Israni S."/>
            <person name="Pitluck S."/>
            <person name="Bryant D."/>
            <person name="Schmutz J."/>
            <person name="Larimer F."/>
            <person name="Land M."/>
            <person name="Kyrpides N."/>
            <person name="Ivanova N."/>
            <person name="Richardson P."/>
        </authorList>
    </citation>
    <scope>NUCLEOTIDE SEQUENCE [LARGE SCALE GENOMIC DNA]</scope>
    <source>
        <strain>CaD3</strain>
    </source>
</reference>
<dbReference type="EC" id="5.3.1.16" evidence="1"/>
<dbReference type="EMBL" id="CP000108">
    <property type="protein sequence ID" value="ABB27813.1"/>
    <property type="molecule type" value="Genomic_DNA"/>
</dbReference>
<dbReference type="SMR" id="Q3AT62"/>
<dbReference type="STRING" id="340177.Cag_0540"/>
<dbReference type="KEGG" id="cch:Cag_0540"/>
<dbReference type="eggNOG" id="COG0106">
    <property type="taxonomic scope" value="Bacteria"/>
</dbReference>
<dbReference type="HOGENOM" id="CLU_048577_1_2_10"/>
<dbReference type="OrthoDB" id="9807749at2"/>
<dbReference type="UniPathway" id="UPA00031">
    <property type="reaction ID" value="UER00009"/>
</dbReference>
<dbReference type="GO" id="GO:0005737">
    <property type="term" value="C:cytoplasm"/>
    <property type="evidence" value="ECO:0007669"/>
    <property type="project" value="UniProtKB-SubCell"/>
</dbReference>
<dbReference type="GO" id="GO:0003949">
    <property type="term" value="F:1-(5-phosphoribosyl)-5-[(5-phosphoribosylamino)methylideneamino]imidazole-4-carboxamide isomerase activity"/>
    <property type="evidence" value="ECO:0007669"/>
    <property type="project" value="UniProtKB-UniRule"/>
</dbReference>
<dbReference type="GO" id="GO:0000105">
    <property type="term" value="P:L-histidine biosynthetic process"/>
    <property type="evidence" value="ECO:0007669"/>
    <property type="project" value="UniProtKB-UniRule"/>
</dbReference>
<dbReference type="GO" id="GO:0000162">
    <property type="term" value="P:L-tryptophan biosynthetic process"/>
    <property type="evidence" value="ECO:0007669"/>
    <property type="project" value="TreeGrafter"/>
</dbReference>
<dbReference type="CDD" id="cd04732">
    <property type="entry name" value="HisA"/>
    <property type="match status" value="1"/>
</dbReference>
<dbReference type="FunFam" id="3.20.20.70:FF:000009">
    <property type="entry name" value="1-(5-phosphoribosyl)-5-[(5-phosphoribosylamino)methylideneamino] imidazole-4-carboxamide isomerase"/>
    <property type="match status" value="1"/>
</dbReference>
<dbReference type="Gene3D" id="3.20.20.70">
    <property type="entry name" value="Aldolase class I"/>
    <property type="match status" value="1"/>
</dbReference>
<dbReference type="HAMAP" id="MF_01014">
    <property type="entry name" value="HisA"/>
    <property type="match status" value="1"/>
</dbReference>
<dbReference type="InterPro" id="IPR013785">
    <property type="entry name" value="Aldolase_TIM"/>
</dbReference>
<dbReference type="InterPro" id="IPR006062">
    <property type="entry name" value="His_biosynth"/>
</dbReference>
<dbReference type="InterPro" id="IPR006063">
    <property type="entry name" value="HisA_bact_arch"/>
</dbReference>
<dbReference type="InterPro" id="IPR044524">
    <property type="entry name" value="Isoase_HisA-like"/>
</dbReference>
<dbReference type="InterPro" id="IPR023016">
    <property type="entry name" value="Isoase_HisA-like_bact"/>
</dbReference>
<dbReference type="InterPro" id="IPR011060">
    <property type="entry name" value="RibuloseP-bd_barrel"/>
</dbReference>
<dbReference type="NCBIfam" id="TIGR00007">
    <property type="entry name" value="1-(5-phosphoribosyl)-5-[(5-phosphoribosylamino)methylideneamino]imidazole-4-carboxamide isomerase"/>
    <property type="match status" value="1"/>
</dbReference>
<dbReference type="PANTHER" id="PTHR43090">
    <property type="entry name" value="1-(5-PHOSPHORIBOSYL)-5-[(5-PHOSPHORIBOSYLAMINO)METHYLIDENEAMINO] IMIDAZOLE-4-CARBOXAMIDE ISOMERASE"/>
    <property type="match status" value="1"/>
</dbReference>
<dbReference type="PANTHER" id="PTHR43090:SF2">
    <property type="entry name" value="1-(5-PHOSPHORIBOSYL)-5-[(5-PHOSPHORIBOSYLAMINO)METHYLIDENEAMINO] IMIDAZOLE-4-CARBOXAMIDE ISOMERASE"/>
    <property type="match status" value="1"/>
</dbReference>
<dbReference type="Pfam" id="PF00977">
    <property type="entry name" value="His_biosynth"/>
    <property type="match status" value="1"/>
</dbReference>
<dbReference type="SUPFAM" id="SSF51366">
    <property type="entry name" value="Ribulose-phoshate binding barrel"/>
    <property type="match status" value="1"/>
</dbReference>
<feature type="chain" id="PRO_0000229050" description="1-(5-phosphoribosyl)-5-[(5-phosphoribosylamino)methylideneamino] imidazole-4-carboxamide isomerase">
    <location>
        <begin position="1"/>
        <end position="257"/>
    </location>
</feature>
<feature type="active site" description="Proton acceptor" evidence="1">
    <location>
        <position position="8"/>
    </location>
</feature>
<feature type="active site" description="Proton donor" evidence="1">
    <location>
        <position position="130"/>
    </location>
</feature>
<keyword id="KW-0028">Amino-acid biosynthesis</keyword>
<keyword id="KW-0963">Cytoplasm</keyword>
<keyword id="KW-0368">Histidine biosynthesis</keyword>
<keyword id="KW-0413">Isomerase</keyword>
<accession>Q3AT62</accession>